<sequence>SGYLPGKEYVYKYKGKVF</sequence>
<proteinExistence type="evidence at protein level"/>
<evidence type="ECO:0000269" key="1">
    <source>
    </source>
</evidence>
<evidence type="ECO:0000303" key="2">
    <source>
    </source>
</evidence>
<evidence type="ECO:0000305" key="3"/>
<name>LNGP_ACULO</name>
<reference evidence="3" key="1">
    <citation type="journal article" date="2016" name="PLoS ONE">
        <title>Longipin: An Amyloid Antimicrobial Peptide from the Harvestman Acutisoma longipes (Arachnida: Opiliones) with Preferential Affinity for Anionic Vesicles.</title>
        <authorList>
            <person name="Sayegh R.S."/>
            <person name="Batista I.F."/>
            <person name="Melo R.L."/>
            <person name="Riske K.A."/>
            <person name="Daffre S."/>
            <person name="Montich G."/>
            <person name="da Silva Junior P.I."/>
        </authorList>
    </citation>
    <scope>PROTEIN SEQUENCE</scope>
    <scope>FUNCTION</scope>
    <scope>SUBCELLULAR LOCATION</scope>
    <scope>INDUCTION</scope>
    <scope>MASS SPECTROMETRY</scope>
    <scope>IDENTIFICATION BY MASS SPECTROMETRY</scope>
    <source>
        <tissue evidence="2">Hemolymph</tissue>
    </source>
</reference>
<comment type="function">
    <text evidence="1">Has antifungal activity against yeasts like C.albicans MDM8 (MIC=15-30 uM), C.albicans IOC 4558 (MIC=7.5-15 uM), C.tropicalis IOC 4560 (MIC=3.8-7.5 uM) and C.guilliermondii IOC 4557 (MIC=3.8-7.5 uM) but not against filamentous fungi like A.niger, C.herbarum ATCC26362 or P.farinosus IBC251. Has weak activity against the Gram-positive bacterium M.luteus A270 (MIC=60-120 uM) and against Gram-negative bacteria P.aeruginosa ATCC27853 (MIC=60-120 uM) and S.marcescens ATCC4112 (MIC=60-120 uM). Not active against S.aureus ATCC 29213 and S.epidermidis ATCC 12228, M.luteus BR2, E.coli D31, E.coli SBS363 or E.cloacae beta12. Probably acts by disrupting target cell membranes.</text>
</comment>
<comment type="subcellular location">
    <subcellularLocation>
        <location evidence="1">Secreted</location>
    </subcellularLocation>
    <subcellularLocation>
        <location evidence="2">Target cell membrane</location>
    </subcellularLocation>
</comment>
<comment type="induction">
    <text evidence="1">Constitutively expressed.</text>
</comment>
<comment type="mass spectrometry"/>
<accession>C0HJF8</accession>
<protein>
    <recommendedName>
        <fullName evidence="2">Longipin</fullName>
    </recommendedName>
</protein>
<feature type="peptide" id="PRO_0000425148" description="Longipin" evidence="1">
    <location>
        <begin position="1"/>
        <end position="18"/>
    </location>
</feature>
<organism evidence="2">
    <name type="scientific">Acutisoma longipes</name>
    <name type="common">Neotropical harvestman</name>
    <name type="synonym">Goniosoma longipes</name>
    <dbReference type="NCBI Taxonomy" id="863974"/>
    <lineage>
        <taxon>Eukaryota</taxon>
        <taxon>Metazoa</taxon>
        <taxon>Ecdysozoa</taxon>
        <taxon>Arthropoda</taxon>
        <taxon>Chelicerata</taxon>
        <taxon>Arachnida</taxon>
        <taxon>Opiliones</taxon>
        <taxon>Laniatores</taxon>
        <taxon>Grassatores</taxon>
        <taxon>Gonyleptoidea</taxon>
        <taxon>Gonyleptidae</taxon>
        <taxon>Acutisoma</taxon>
    </lineage>
</organism>
<keyword id="KW-0044">Antibiotic</keyword>
<keyword id="KW-0929">Antimicrobial</keyword>
<keyword id="KW-0903">Direct protein sequencing</keyword>
<keyword id="KW-0295">Fungicide</keyword>
<keyword id="KW-0472">Membrane</keyword>
<keyword id="KW-0964">Secreted</keyword>
<keyword id="KW-1052">Target cell membrane</keyword>
<keyword id="KW-1053">Target membrane</keyword>
<dbReference type="GO" id="GO:0005576">
    <property type="term" value="C:extracellular region"/>
    <property type="evidence" value="ECO:0000314"/>
    <property type="project" value="UniProtKB"/>
</dbReference>
<dbReference type="GO" id="GO:0016020">
    <property type="term" value="C:membrane"/>
    <property type="evidence" value="ECO:0007669"/>
    <property type="project" value="UniProtKB-KW"/>
</dbReference>
<dbReference type="GO" id="GO:0044218">
    <property type="term" value="C:other organism cell membrane"/>
    <property type="evidence" value="ECO:0007669"/>
    <property type="project" value="UniProtKB-KW"/>
</dbReference>
<dbReference type="GO" id="GO:0061844">
    <property type="term" value="P:antimicrobial humoral immune response mediated by antimicrobial peptide"/>
    <property type="evidence" value="ECO:0000314"/>
    <property type="project" value="UniProtKB"/>
</dbReference>
<dbReference type="GO" id="GO:0050832">
    <property type="term" value="P:defense response to fungus"/>
    <property type="evidence" value="ECO:0000314"/>
    <property type="project" value="UniProtKB"/>
</dbReference>
<dbReference type="GO" id="GO:0050829">
    <property type="term" value="P:defense response to Gram-negative bacterium"/>
    <property type="evidence" value="ECO:0000314"/>
    <property type="project" value="UniProtKB"/>
</dbReference>
<dbReference type="GO" id="GO:0050830">
    <property type="term" value="P:defense response to Gram-positive bacterium"/>
    <property type="evidence" value="ECO:0000314"/>
    <property type="project" value="UniProtKB"/>
</dbReference>
<dbReference type="GO" id="GO:0031640">
    <property type="term" value="P:killing of cells of another organism"/>
    <property type="evidence" value="ECO:0007669"/>
    <property type="project" value="UniProtKB-KW"/>
</dbReference>